<keyword id="KW-0067">ATP-binding</keyword>
<keyword id="KW-0378">Hydrolase</keyword>
<keyword id="KW-0547">Nucleotide-binding</keyword>
<keyword id="KW-0576">Peroxisome</keyword>
<keyword id="KW-0645">Protease</keyword>
<keyword id="KW-1185">Reference proteome</keyword>
<keyword id="KW-0720">Serine protease</keyword>
<protein>
    <recommendedName>
        <fullName evidence="1">Lon protease homolog 2, peroxisomal</fullName>
        <ecNumber evidence="1">3.4.21.53</ecNumber>
    </recommendedName>
</protein>
<organism>
    <name type="scientific">Aspergillus niger (strain ATCC MYA-4892 / CBS 513.88 / FGSC A1513)</name>
    <dbReference type="NCBI Taxonomy" id="425011"/>
    <lineage>
        <taxon>Eukaryota</taxon>
        <taxon>Fungi</taxon>
        <taxon>Dikarya</taxon>
        <taxon>Ascomycota</taxon>
        <taxon>Pezizomycotina</taxon>
        <taxon>Eurotiomycetes</taxon>
        <taxon>Eurotiomycetidae</taxon>
        <taxon>Eurotiales</taxon>
        <taxon>Aspergillaceae</taxon>
        <taxon>Aspergillus</taxon>
        <taxon>Aspergillus subgen. Circumdati</taxon>
    </lineage>
</organism>
<sequence length="929" mass="102394">MGSNSGRTTKLPLVPLPKGSVLLPGITLRIPVSNRPDLANLLSTIVDRSAVAKRDGTAITFGCVPLSSPYLSKDGQRLIDDGSLDEDRREEFDMIDAGQSRKEDLFRHGTIGKVIGIQRRAYSEPALVVQGVQRFTIRRVLKERPFFEAEAVVHDEKVSGDAETVELFQQLRQLSRELLTLLRLSSLLPSPGSRLSPLIARKFELFITKSDVSHASRLADFMADVADSGFEEKLRILASLDVKIRLERVVEILTRQLQSIKSNVKVTTITTNSFPSSGFDINQIDPRDREILARKAMAGLSGLTPPGLSAGRNNDNDDKESNEVDELQQRLQEAQLSPEARKVADKELRRLRKMNPANAEYGVCRTYLENIADIPWTKMTEDQLGPETLKRARKQLDDDHYGLEKIKKRLLEYLAVLRLKQSTNRDVERQIESLSKELEASDGGDLEKEVPVLSETDRVAVETKLHMLKTRRMGDKSPILLLVGPPGVGKTSLARSVASSLGRKFHRISLGGVRDEAEIRGHRRTYVAAMPGLIVSGLKKVGVANPVFLLDEIDKVGGANFQGDPSAAMLEVLDPEQNHTFSDHYINIPIDLSKVLFIATANSLDTIPAPLLDRMETISLSGYTTVEKRHIAKRHLIPKQIRANGLSDGQVVLSDEVIDKIITSYTRESGVRNLERELGSVCRFKAVQFADAGDAGRLDAYNPVVSMDELEEILGIERFEEEIAEKHGRPGVVTGLVAYSTGGQGSILFIEVADMPGNGRVQLTGKLGDVLKESVEVALTWVKAHAFELGLTADPTEDIMKNRSLHVHCPSGAIPKDGPSAGLAHTMGLISLFTGKAVPPSVAMTGEVSLRGKVMPVGGIKEKLIGALRAGVKTVLLPHHNRKDVKDVPQEVSEGLEIVYVTHIWEAIRQVWPDAHWPGQHTHFIESRL</sequence>
<accession>A2RAF6</accession>
<feature type="chain" id="PRO_0000395790" description="Lon protease homolog 2, peroxisomal">
    <location>
        <begin position="1"/>
        <end position="929"/>
    </location>
</feature>
<feature type="domain" description="Lon N-terminal" evidence="3">
    <location>
        <begin position="11"/>
        <end position="257"/>
    </location>
</feature>
<feature type="domain" description="Lon proteolytic" evidence="2">
    <location>
        <begin position="727"/>
        <end position="914"/>
    </location>
</feature>
<feature type="region of interest" description="Disordered" evidence="4">
    <location>
        <begin position="302"/>
        <end position="325"/>
    </location>
</feature>
<feature type="short sequence motif" description="Microbody targeting signal" evidence="1">
    <location>
        <begin position="927"/>
        <end position="929"/>
    </location>
</feature>
<feature type="active site" evidence="1">
    <location>
        <position position="820"/>
    </location>
</feature>
<feature type="active site" evidence="1">
    <location>
        <position position="863"/>
    </location>
</feature>
<feature type="binding site" evidence="1">
    <location>
        <begin position="484"/>
        <end position="491"/>
    </location>
    <ligand>
        <name>ATP</name>
        <dbReference type="ChEBI" id="CHEBI:30616"/>
    </ligand>
</feature>
<name>LONP2_ASPNC</name>
<reference key="1">
    <citation type="journal article" date="2007" name="Nat. Biotechnol.">
        <title>Genome sequencing and analysis of the versatile cell factory Aspergillus niger CBS 513.88.</title>
        <authorList>
            <person name="Pel H.J."/>
            <person name="de Winde J.H."/>
            <person name="Archer D.B."/>
            <person name="Dyer P.S."/>
            <person name="Hofmann G."/>
            <person name="Schaap P.J."/>
            <person name="Turner G."/>
            <person name="de Vries R.P."/>
            <person name="Albang R."/>
            <person name="Albermann K."/>
            <person name="Andersen M.R."/>
            <person name="Bendtsen J.D."/>
            <person name="Benen J.A.E."/>
            <person name="van den Berg M."/>
            <person name="Breestraat S."/>
            <person name="Caddick M.X."/>
            <person name="Contreras R."/>
            <person name="Cornell M."/>
            <person name="Coutinho P.M."/>
            <person name="Danchin E.G.J."/>
            <person name="Debets A.J.M."/>
            <person name="Dekker P."/>
            <person name="van Dijck P.W.M."/>
            <person name="van Dijk A."/>
            <person name="Dijkhuizen L."/>
            <person name="Driessen A.J.M."/>
            <person name="d'Enfert C."/>
            <person name="Geysens S."/>
            <person name="Goosen C."/>
            <person name="Groot G.S.P."/>
            <person name="de Groot P.W.J."/>
            <person name="Guillemette T."/>
            <person name="Henrissat B."/>
            <person name="Herweijer M."/>
            <person name="van den Hombergh J.P.T.W."/>
            <person name="van den Hondel C.A.M.J.J."/>
            <person name="van der Heijden R.T.J.M."/>
            <person name="van der Kaaij R.M."/>
            <person name="Klis F.M."/>
            <person name="Kools H.J."/>
            <person name="Kubicek C.P."/>
            <person name="van Kuyk P.A."/>
            <person name="Lauber J."/>
            <person name="Lu X."/>
            <person name="van der Maarel M.J.E.C."/>
            <person name="Meulenberg R."/>
            <person name="Menke H."/>
            <person name="Mortimer M.A."/>
            <person name="Nielsen J."/>
            <person name="Oliver S.G."/>
            <person name="Olsthoorn M."/>
            <person name="Pal K."/>
            <person name="van Peij N.N.M.E."/>
            <person name="Ram A.F.J."/>
            <person name="Rinas U."/>
            <person name="Roubos J.A."/>
            <person name="Sagt C.M.J."/>
            <person name="Schmoll M."/>
            <person name="Sun J."/>
            <person name="Ussery D."/>
            <person name="Varga J."/>
            <person name="Vervecken W."/>
            <person name="van de Vondervoort P.J.J."/>
            <person name="Wedler H."/>
            <person name="Woesten H.A.B."/>
            <person name="Zeng A.-P."/>
            <person name="van Ooyen A.J.J."/>
            <person name="Visser J."/>
            <person name="Stam H."/>
        </authorList>
    </citation>
    <scope>NUCLEOTIDE SEQUENCE [LARGE SCALE GENOMIC DNA]</scope>
    <source>
        <strain>ATCC MYA-4892 / CBS 513.88 / FGSC A1513</strain>
    </source>
</reference>
<evidence type="ECO:0000255" key="1">
    <source>
        <dbReference type="HAMAP-Rule" id="MF_03121"/>
    </source>
</evidence>
<evidence type="ECO:0000255" key="2">
    <source>
        <dbReference type="PROSITE-ProRule" id="PRU01122"/>
    </source>
</evidence>
<evidence type="ECO:0000255" key="3">
    <source>
        <dbReference type="PROSITE-ProRule" id="PRU01123"/>
    </source>
</evidence>
<evidence type="ECO:0000256" key="4">
    <source>
        <dbReference type="SAM" id="MobiDB-lite"/>
    </source>
</evidence>
<proteinExistence type="inferred from homology"/>
<dbReference type="EC" id="3.4.21.53" evidence="1"/>
<dbReference type="EMBL" id="AM270401">
    <property type="protein sequence ID" value="CAK48682.1"/>
    <property type="molecule type" value="Genomic_DNA"/>
</dbReference>
<dbReference type="SMR" id="A2RAF6"/>
<dbReference type="EnsemblFungi" id="CAK48682">
    <property type="protein sequence ID" value="CAK48682"/>
    <property type="gene ID" value="An18g02980"/>
</dbReference>
<dbReference type="VEuPathDB" id="FungiDB:An18g02980"/>
<dbReference type="HOGENOM" id="CLU_004109_4_0_1"/>
<dbReference type="Proteomes" id="UP000006706">
    <property type="component" value="Chromosome 8L"/>
</dbReference>
<dbReference type="GO" id="GO:0005782">
    <property type="term" value="C:peroxisomal matrix"/>
    <property type="evidence" value="ECO:0007669"/>
    <property type="project" value="UniProtKB-SubCell"/>
</dbReference>
<dbReference type="GO" id="GO:0005524">
    <property type="term" value="F:ATP binding"/>
    <property type="evidence" value="ECO:0007669"/>
    <property type="project" value="UniProtKB-UniRule"/>
</dbReference>
<dbReference type="GO" id="GO:0016887">
    <property type="term" value="F:ATP hydrolysis activity"/>
    <property type="evidence" value="ECO:0007669"/>
    <property type="project" value="UniProtKB-UniRule"/>
</dbReference>
<dbReference type="GO" id="GO:0004176">
    <property type="term" value="F:ATP-dependent peptidase activity"/>
    <property type="evidence" value="ECO:0007669"/>
    <property type="project" value="UniProtKB-UniRule"/>
</dbReference>
<dbReference type="GO" id="GO:0004252">
    <property type="term" value="F:serine-type endopeptidase activity"/>
    <property type="evidence" value="ECO:0007669"/>
    <property type="project" value="UniProtKB-UniRule"/>
</dbReference>
<dbReference type="GO" id="GO:0016558">
    <property type="term" value="P:protein import into peroxisome matrix"/>
    <property type="evidence" value="ECO:0007669"/>
    <property type="project" value="UniProtKB-UniRule"/>
</dbReference>
<dbReference type="GO" id="GO:0016485">
    <property type="term" value="P:protein processing"/>
    <property type="evidence" value="ECO:0007669"/>
    <property type="project" value="UniProtKB-UniRule"/>
</dbReference>
<dbReference type="GO" id="GO:0006515">
    <property type="term" value="P:protein quality control for misfolded or incompletely synthesized proteins"/>
    <property type="evidence" value="ECO:0007669"/>
    <property type="project" value="UniProtKB-UniRule"/>
</dbReference>
<dbReference type="CDD" id="cd19500">
    <property type="entry name" value="RecA-like_Lon"/>
    <property type="match status" value="1"/>
</dbReference>
<dbReference type="FunFam" id="1.20.5.5270:FF:000002">
    <property type="entry name" value="Lon protease homolog"/>
    <property type="match status" value="1"/>
</dbReference>
<dbReference type="FunFam" id="1.10.8.60:FF:000091">
    <property type="entry name" value="Lon protease homolog 2, peroxisomal"/>
    <property type="match status" value="1"/>
</dbReference>
<dbReference type="FunFam" id="1.20.58.1480:FF:000011">
    <property type="entry name" value="Lon protease homolog 2, peroxisomal"/>
    <property type="match status" value="1"/>
</dbReference>
<dbReference type="FunFam" id="2.30.130.40:FF:000011">
    <property type="entry name" value="Lon protease homolog 2, peroxisomal"/>
    <property type="match status" value="1"/>
</dbReference>
<dbReference type="FunFam" id="3.30.230.10:FF:000039">
    <property type="entry name" value="Lon protease homolog 2, peroxisomal"/>
    <property type="match status" value="1"/>
</dbReference>
<dbReference type="Gene3D" id="1.10.8.60">
    <property type="match status" value="1"/>
</dbReference>
<dbReference type="Gene3D" id="1.20.5.5270">
    <property type="match status" value="1"/>
</dbReference>
<dbReference type="Gene3D" id="1.20.58.1480">
    <property type="match status" value="1"/>
</dbReference>
<dbReference type="Gene3D" id="3.30.230.10">
    <property type="match status" value="1"/>
</dbReference>
<dbReference type="Gene3D" id="2.30.130.40">
    <property type="entry name" value="LON domain-like"/>
    <property type="match status" value="1"/>
</dbReference>
<dbReference type="Gene3D" id="3.40.50.300">
    <property type="entry name" value="P-loop containing nucleotide triphosphate hydrolases"/>
    <property type="match status" value="1"/>
</dbReference>
<dbReference type="HAMAP" id="MF_03121">
    <property type="entry name" value="lonp2_euk"/>
    <property type="match status" value="1"/>
</dbReference>
<dbReference type="InterPro" id="IPR003593">
    <property type="entry name" value="AAA+_ATPase"/>
</dbReference>
<dbReference type="InterPro" id="IPR003959">
    <property type="entry name" value="ATPase_AAA_core"/>
</dbReference>
<dbReference type="InterPro" id="IPR004815">
    <property type="entry name" value="Lon_bac/euk-typ"/>
</dbReference>
<dbReference type="InterPro" id="IPR054594">
    <property type="entry name" value="Lon_lid"/>
</dbReference>
<dbReference type="InterPro" id="IPR008269">
    <property type="entry name" value="Lon_proteolytic"/>
</dbReference>
<dbReference type="InterPro" id="IPR027065">
    <property type="entry name" value="Lon_Prtase"/>
</dbReference>
<dbReference type="InterPro" id="IPR003111">
    <property type="entry name" value="Lon_prtase_N"/>
</dbReference>
<dbReference type="InterPro" id="IPR046336">
    <property type="entry name" value="Lon_prtase_N_sf"/>
</dbReference>
<dbReference type="InterPro" id="IPR027501">
    <property type="entry name" value="Lonp2_euk"/>
</dbReference>
<dbReference type="InterPro" id="IPR027417">
    <property type="entry name" value="P-loop_NTPase"/>
</dbReference>
<dbReference type="InterPro" id="IPR015947">
    <property type="entry name" value="PUA-like_sf"/>
</dbReference>
<dbReference type="InterPro" id="IPR020568">
    <property type="entry name" value="Ribosomal_Su5_D2-typ_SF"/>
</dbReference>
<dbReference type="InterPro" id="IPR014721">
    <property type="entry name" value="Ribsml_uS5_D2-typ_fold_subgr"/>
</dbReference>
<dbReference type="NCBIfam" id="TIGR00763">
    <property type="entry name" value="lon"/>
    <property type="match status" value="1"/>
</dbReference>
<dbReference type="PANTHER" id="PTHR10046">
    <property type="entry name" value="ATP DEPENDENT LON PROTEASE FAMILY MEMBER"/>
    <property type="match status" value="1"/>
</dbReference>
<dbReference type="Pfam" id="PF00004">
    <property type="entry name" value="AAA"/>
    <property type="match status" value="1"/>
</dbReference>
<dbReference type="Pfam" id="PF05362">
    <property type="entry name" value="Lon_C"/>
    <property type="match status" value="1"/>
</dbReference>
<dbReference type="Pfam" id="PF22667">
    <property type="entry name" value="Lon_lid"/>
    <property type="match status" value="1"/>
</dbReference>
<dbReference type="Pfam" id="PF02190">
    <property type="entry name" value="LON_substr_bdg"/>
    <property type="match status" value="1"/>
</dbReference>
<dbReference type="PIRSF" id="PIRSF001174">
    <property type="entry name" value="Lon_proteas"/>
    <property type="match status" value="1"/>
</dbReference>
<dbReference type="PRINTS" id="PR00830">
    <property type="entry name" value="ENDOLAPTASE"/>
</dbReference>
<dbReference type="SMART" id="SM00382">
    <property type="entry name" value="AAA"/>
    <property type="match status" value="1"/>
</dbReference>
<dbReference type="SMART" id="SM00464">
    <property type="entry name" value="LON"/>
    <property type="match status" value="1"/>
</dbReference>
<dbReference type="SUPFAM" id="SSF52540">
    <property type="entry name" value="P-loop containing nucleoside triphosphate hydrolases"/>
    <property type="match status" value="1"/>
</dbReference>
<dbReference type="SUPFAM" id="SSF88697">
    <property type="entry name" value="PUA domain-like"/>
    <property type="match status" value="1"/>
</dbReference>
<dbReference type="SUPFAM" id="SSF54211">
    <property type="entry name" value="Ribosomal protein S5 domain 2-like"/>
    <property type="match status" value="1"/>
</dbReference>
<dbReference type="PROSITE" id="PS51787">
    <property type="entry name" value="LON_N"/>
    <property type="match status" value="1"/>
</dbReference>
<dbReference type="PROSITE" id="PS51786">
    <property type="entry name" value="LON_PROTEOLYTIC"/>
    <property type="match status" value="1"/>
</dbReference>
<gene>
    <name type="ORF">An18g02980</name>
</gene>
<comment type="function">
    <text evidence="1">ATP-dependent serine protease that mediates the selective degradation of misfolded and unassembled polypeptides in the peroxisomal matrix. Necessary for type 2 peroxisome targeting signal (PTS2)-containing protein processing and facilitates peroxisome matrix protein import.</text>
</comment>
<comment type="catalytic activity">
    <reaction evidence="1">
        <text>Hydrolysis of proteins in presence of ATP.</text>
        <dbReference type="EC" id="3.4.21.53"/>
    </reaction>
</comment>
<comment type="subcellular location">
    <subcellularLocation>
        <location evidence="1">Peroxisome matrix</location>
    </subcellularLocation>
</comment>
<comment type="similarity">
    <text evidence="1">Belongs to the peptidase S16 family.</text>
</comment>